<dbReference type="EMBL" id="AK007972">
    <property type="protein sequence ID" value="BAB25381.1"/>
    <property type="molecule type" value="mRNA"/>
</dbReference>
<dbReference type="EMBL" id="AK020258">
    <property type="protein sequence ID" value="BAB32043.1"/>
    <property type="molecule type" value="mRNA"/>
</dbReference>
<dbReference type="EMBL" id="AK159880">
    <property type="protein sequence ID" value="BAE35452.1"/>
    <property type="molecule type" value="mRNA"/>
</dbReference>
<dbReference type="EMBL" id="BC049974">
    <property type="protein sequence ID" value="AAH49974.2"/>
    <property type="molecule type" value="mRNA"/>
</dbReference>
<dbReference type="EMBL" id="BC055439">
    <property type="protein sequence ID" value="AAH55439.1"/>
    <property type="molecule type" value="mRNA"/>
</dbReference>
<dbReference type="CCDS" id="CCDS50779.1"/>
<dbReference type="RefSeq" id="NP_001405859.1">
    <property type="nucleotide sequence ID" value="NM_001418930.1"/>
</dbReference>
<dbReference type="RefSeq" id="NP_742116.1">
    <property type="nucleotide sequence ID" value="NM_172118.2"/>
</dbReference>
<dbReference type="RefSeq" id="XP_006500516.1">
    <property type="nucleotide sequence ID" value="XM_006500453.3"/>
</dbReference>
<dbReference type="SMR" id="Q9CQ19"/>
<dbReference type="BioGRID" id="221155">
    <property type="interactions" value="4"/>
</dbReference>
<dbReference type="FunCoup" id="Q9CQ19">
    <property type="interactions" value="894"/>
</dbReference>
<dbReference type="IntAct" id="Q9CQ19">
    <property type="interactions" value="2"/>
</dbReference>
<dbReference type="STRING" id="10090.ENSMUSP00000085913"/>
<dbReference type="GlyGen" id="Q9CQ19">
    <property type="glycosylation" value="1 site, 1 O-linked glycan (1 site)"/>
</dbReference>
<dbReference type="iPTMnet" id="Q9CQ19"/>
<dbReference type="PhosphoSitePlus" id="Q9CQ19"/>
<dbReference type="SwissPalm" id="Q9CQ19"/>
<dbReference type="jPOST" id="Q9CQ19"/>
<dbReference type="PaxDb" id="10090-ENSMUSP00000085913"/>
<dbReference type="PeptideAtlas" id="Q9CQ19"/>
<dbReference type="ProteomicsDB" id="252630"/>
<dbReference type="Pumba" id="Q9CQ19"/>
<dbReference type="Antibodypedia" id="11734">
    <property type="antibodies" value="428 antibodies from 35 providers"/>
</dbReference>
<dbReference type="Ensembl" id="ENSMUST00000088552.7">
    <property type="protein sequence ID" value="ENSMUSP00000085913.7"/>
    <property type="gene ID" value="ENSMUSG00000067818.7"/>
</dbReference>
<dbReference type="GeneID" id="98932"/>
<dbReference type="KEGG" id="mmu:98932"/>
<dbReference type="UCSC" id="uc008nnw.2">
    <property type="organism name" value="mouse"/>
</dbReference>
<dbReference type="AGR" id="MGI:2138915"/>
<dbReference type="CTD" id="10398"/>
<dbReference type="MGI" id="MGI:2138915">
    <property type="gene designation" value="Myl9"/>
</dbReference>
<dbReference type="VEuPathDB" id="HostDB:ENSMUSG00000067818"/>
<dbReference type="eggNOG" id="KOG0031">
    <property type="taxonomic scope" value="Eukaryota"/>
</dbReference>
<dbReference type="GeneTree" id="ENSGT00940000155458"/>
<dbReference type="HOGENOM" id="CLU_061288_9_3_1"/>
<dbReference type="InParanoid" id="Q9CQ19"/>
<dbReference type="OMA" id="GVNFTMF"/>
<dbReference type="OrthoDB" id="429467at2759"/>
<dbReference type="PhylomeDB" id="Q9CQ19"/>
<dbReference type="TreeFam" id="TF314218"/>
<dbReference type="Reactome" id="R-MMU-445355">
    <property type="pathway name" value="Smooth Muscle Contraction"/>
</dbReference>
<dbReference type="Reactome" id="R-MMU-5627123">
    <property type="pathway name" value="RHO GTPases activate PAKs"/>
</dbReference>
<dbReference type="BioGRID-ORCS" id="98932">
    <property type="hits" value="0 hits in 76 CRISPR screens"/>
</dbReference>
<dbReference type="ChiTaRS" id="Myl9">
    <property type="organism name" value="mouse"/>
</dbReference>
<dbReference type="PRO" id="PR:Q9CQ19"/>
<dbReference type="Proteomes" id="UP000000589">
    <property type="component" value="Chromosome 2"/>
</dbReference>
<dbReference type="RNAct" id="Q9CQ19">
    <property type="molecule type" value="protein"/>
</dbReference>
<dbReference type="Bgee" id="ENSMUSG00000067818">
    <property type="expression patterns" value="Expressed in ascending aorta and 275 other cell types or tissues"/>
</dbReference>
<dbReference type="GO" id="GO:0005938">
    <property type="term" value="C:cell cortex"/>
    <property type="evidence" value="ECO:0007669"/>
    <property type="project" value="UniProtKB-SubCell"/>
</dbReference>
<dbReference type="GO" id="GO:0016460">
    <property type="term" value="C:myosin II complex"/>
    <property type="evidence" value="ECO:0000314"/>
    <property type="project" value="MGI"/>
</dbReference>
<dbReference type="GO" id="GO:0001725">
    <property type="term" value="C:stress fiber"/>
    <property type="evidence" value="ECO:0000314"/>
    <property type="project" value="MGI"/>
</dbReference>
<dbReference type="GO" id="GO:0030018">
    <property type="term" value="C:Z disc"/>
    <property type="evidence" value="ECO:0000314"/>
    <property type="project" value="MGI"/>
</dbReference>
<dbReference type="GO" id="GO:0005509">
    <property type="term" value="F:calcium ion binding"/>
    <property type="evidence" value="ECO:0007669"/>
    <property type="project" value="InterPro"/>
</dbReference>
<dbReference type="GO" id="GO:0032036">
    <property type="term" value="F:myosin heavy chain binding"/>
    <property type="evidence" value="ECO:0000353"/>
    <property type="project" value="MGI"/>
</dbReference>
<dbReference type="GO" id="GO:0005200">
    <property type="term" value="F:structural constituent of cytoskeleton"/>
    <property type="evidence" value="ECO:0007669"/>
    <property type="project" value="Ensembl"/>
</dbReference>
<dbReference type="GO" id="GO:0043149">
    <property type="term" value="P:stress fiber assembly"/>
    <property type="evidence" value="ECO:0007669"/>
    <property type="project" value="Ensembl"/>
</dbReference>
<dbReference type="CDD" id="cd00051">
    <property type="entry name" value="EFh"/>
    <property type="match status" value="1"/>
</dbReference>
<dbReference type="FunFam" id="1.10.238.10:FF:000010">
    <property type="entry name" value="Myosin regulatory light chain 2, atrial isoform"/>
    <property type="match status" value="1"/>
</dbReference>
<dbReference type="FunFam" id="1.10.238.10:FF:000007">
    <property type="entry name" value="Putative myosin regulatory light chain sqh"/>
    <property type="match status" value="1"/>
</dbReference>
<dbReference type="Gene3D" id="1.10.238.10">
    <property type="entry name" value="EF-hand"/>
    <property type="match status" value="2"/>
</dbReference>
<dbReference type="InterPro" id="IPR011992">
    <property type="entry name" value="EF-hand-dom_pair"/>
</dbReference>
<dbReference type="InterPro" id="IPR018247">
    <property type="entry name" value="EF_Hand_1_Ca_BS"/>
</dbReference>
<dbReference type="InterPro" id="IPR002048">
    <property type="entry name" value="EF_hand_dom"/>
</dbReference>
<dbReference type="InterPro" id="IPR050403">
    <property type="entry name" value="Myosin_RLC"/>
</dbReference>
<dbReference type="PANTHER" id="PTHR23049">
    <property type="entry name" value="MYOSIN REGULATORY LIGHT CHAIN 2"/>
    <property type="match status" value="1"/>
</dbReference>
<dbReference type="Pfam" id="PF13499">
    <property type="entry name" value="EF-hand_7"/>
    <property type="match status" value="2"/>
</dbReference>
<dbReference type="SMART" id="SM00054">
    <property type="entry name" value="EFh"/>
    <property type="match status" value="2"/>
</dbReference>
<dbReference type="SUPFAM" id="SSF47473">
    <property type="entry name" value="EF-hand"/>
    <property type="match status" value="1"/>
</dbReference>
<dbReference type="PROSITE" id="PS00018">
    <property type="entry name" value="EF_HAND_1"/>
    <property type="match status" value="1"/>
</dbReference>
<dbReference type="PROSITE" id="PS50222">
    <property type="entry name" value="EF_HAND_2"/>
    <property type="match status" value="3"/>
</dbReference>
<keyword id="KW-0007">Acetylation</keyword>
<keyword id="KW-0106">Calcium</keyword>
<keyword id="KW-0963">Cytoplasm</keyword>
<keyword id="KW-0206">Cytoskeleton</keyword>
<keyword id="KW-0479">Metal-binding</keyword>
<keyword id="KW-0505">Motor protein</keyword>
<keyword id="KW-0514">Muscle protein</keyword>
<keyword id="KW-0518">Myosin</keyword>
<keyword id="KW-0597">Phosphoprotein</keyword>
<keyword id="KW-1185">Reference proteome</keyword>
<keyword id="KW-0677">Repeat</keyword>
<accession>Q9CQ19</accession>
<accession>Q3TW15</accession>
<accession>Q80X77</accession>
<sequence>MSSKRAKAKTTKKRPQRATSNVFAMFDQSQIQEFKEAFNMIDQNRDGFIDKEDLHDMLASLGKNPTDEYLEGMMNEAPGPINFTMFLTMFGEKLNGTDPEDVIRNAFACFDEEASGFIHEDHLRELLTTMGDRFTDEEVDEMYREAPIDKKGNFNYVEFTRILKHGAKDKDD</sequence>
<evidence type="ECO:0000250" key="1"/>
<evidence type="ECO:0000250" key="2">
    <source>
        <dbReference type="UniProtKB" id="P24844"/>
    </source>
</evidence>
<evidence type="ECO:0000250" key="3">
    <source>
        <dbReference type="UniProtKB" id="P29269"/>
    </source>
</evidence>
<evidence type="ECO:0000255" key="4">
    <source>
        <dbReference type="PROSITE-ProRule" id="PRU00448"/>
    </source>
</evidence>
<evidence type="ECO:0000256" key="5">
    <source>
        <dbReference type="SAM" id="MobiDB-lite"/>
    </source>
</evidence>
<evidence type="ECO:0000269" key="6">
    <source>
    </source>
</evidence>
<evidence type="ECO:0000269" key="7">
    <source>
    </source>
</evidence>
<evidence type="ECO:0000305" key="8"/>
<evidence type="ECO:0000305" key="9">
    <source>
    </source>
</evidence>
<evidence type="ECO:0000305" key="10">
    <source>
    </source>
</evidence>
<name>MYL9_MOUSE</name>
<organism>
    <name type="scientific">Mus musculus</name>
    <name type="common">Mouse</name>
    <dbReference type="NCBI Taxonomy" id="10090"/>
    <lineage>
        <taxon>Eukaryota</taxon>
        <taxon>Metazoa</taxon>
        <taxon>Chordata</taxon>
        <taxon>Craniata</taxon>
        <taxon>Vertebrata</taxon>
        <taxon>Euteleostomi</taxon>
        <taxon>Mammalia</taxon>
        <taxon>Eutheria</taxon>
        <taxon>Euarchontoglires</taxon>
        <taxon>Glires</taxon>
        <taxon>Rodentia</taxon>
        <taxon>Myomorpha</taxon>
        <taxon>Muroidea</taxon>
        <taxon>Muridae</taxon>
        <taxon>Murinae</taxon>
        <taxon>Mus</taxon>
        <taxon>Mus</taxon>
    </lineage>
</organism>
<protein>
    <recommendedName>
        <fullName>Myosin regulatory light polypeptide 9</fullName>
    </recommendedName>
    <alternativeName>
        <fullName>Myosin regulatory light chain 2, smooth muscle isoform</fullName>
    </alternativeName>
    <alternativeName>
        <fullName>Myosin regulatory light chain 9</fullName>
    </alternativeName>
</protein>
<reference key="1">
    <citation type="journal article" date="2005" name="Science">
        <title>The transcriptional landscape of the mammalian genome.</title>
        <authorList>
            <person name="Carninci P."/>
            <person name="Kasukawa T."/>
            <person name="Katayama S."/>
            <person name="Gough J."/>
            <person name="Frith M.C."/>
            <person name="Maeda N."/>
            <person name="Oyama R."/>
            <person name="Ravasi T."/>
            <person name="Lenhard B."/>
            <person name="Wells C."/>
            <person name="Kodzius R."/>
            <person name="Shimokawa K."/>
            <person name="Bajic V.B."/>
            <person name="Brenner S.E."/>
            <person name="Batalov S."/>
            <person name="Forrest A.R."/>
            <person name="Zavolan M."/>
            <person name="Davis M.J."/>
            <person name="Wilming L.G."/>
            <person name="Aidinis V."/>
            <person name="Allen J.E."/>
            <person name="Ambesi-Impiombato A."/>
            <person name="Apweiler R."/>
            <person name="Aturaliya R.N."/>
            <person name="Bailey T.L."/>
            <person name="Bansal M."/>
            <person name="Baxter L."/>
            <person name="Beisel K.W."/>
            <person name="Bersano T."/>
            <person name="Bono H."/>
            <person name="Chalk A.M."/>
            <person name="Chiu K.P."/>
            <person name="Choudhary V."/>
            <person name="Christoffels A."/>
            <person name="Clutterbuck D.R."/>
            <person name="Crowe M.L."/>
            <person name="Dalla E."/>
            <person name="Dalrymple B.P."/>
            <person name="de Bono B."/>
            <person name="Della Gatta G."/>
            <person name="di Bernardo D."/>
            <person name="Down T."/>
            <person name="Engstrom P."/>
            <person name="Fagiolini M."/>
            <person name="Faulkner G."/>
            <person name="Fletcher C.F."/>
            <person name="Fukushima T."/>
            <person name="Furuno M."/>
            <person name="Futaki S."/>
            <person name="Gariboldi M."/>
            <person name="Georgii-Hemming P."/>
            <person name="Gingeras T.R."/>
            <person name="Gojobori T."/>
            <person name="Green R.E."/>
            <person name="Gustincich S."/>
            <person name="Harbers M."/>
            <person name="Hayashi Y."/>
            <person name="Hensch T.K."/>
            <person name="Hirokawa N."/>
            <person name="Hill D."/>
            <person name="Huminiecki L."/>
            <person name="Iacono M."/>
            <person name="Ikeo K."/>
            <person name="Iwama A."/>
            <person name="Ishikawa T."/>
            <person name="Jakt M."/>
            <person name="Kanapin A."/>
            <person name="Katoh M."/>
            <person name="Kawasawa Y."/>
            <person name="Kelso J."/>
            <person name="Kitamura H."/>
            <person name="Kitano H."/>
            <person name="Kollias G."/>
            <person name="Krishnan S.P."/>
            <person name="Kruger A."/>
            <person name="Kummerfeld S.K."/>
            <person name="Kurochkin I.V."/>
            <person name="Lareau L.F."/>
            <person name="Lazarevic D."/>
            <person name="Lipovich L."/>
            <person name="Liu J."/>
            <person name="Liuni S."/>
            <person name="McWilliam S."/>
            <person name="Madan Babu M."/>
            <person name="Madera M."/>
            <person name="Marchionni L."/>
            <person name="Matsuda H."/>
            <person name="Matsuzawa S."/>
            <person name="Miki H."/>
            <person name="Mignone F."/>
            <person name="Miyake S."/>
            <person name="Morris K."/>
            <person name="Mottagui-Tabar S."/>
            <person name="Mulder N."/>
            <person name="Nakano N."/>
            <person name="Nakauchi H."/>
            <person name="Ng P."/>
            <person name="Nilsson R."/>
            <person name="Nishiguchi S."/>
            <person name="Nishikawa S."/>
            <person name="Nori F."/>
            <person name="Ohara O."/>
            <person name="Okazaki Y."/>
            <person name="Orlando V."/>
            <person name="Pang K.C."/>
            <person name="Pavan W.J."/>
            <person name="Pavesi G."/>
            <person name="Pesole G."/>
            <person name="Petrovsky N."/>
            <person name="Piazza S."/>
            <person name="Reed J."/>
            <person name="Reid J.F."/>
            <person name="Ring B.Z."/>
            <person name="Ringwald M."/>
            <person name="Rost B."/>
            <person name="Ruan Y."/>
            <person name="Salzberg S.L."/>
            <person name="Sandelin A."/>
            <person name="Schneider C."/>
            <person name="Schoenbach C."/>
            <person name="Sekiguchi K."/>
            <person name="Semple C.A."/>
            <person name="Seno S."/>
            <person name="Sessa L."/>
            <person name="Sheng Y."/>
            <person name="Shibata Y."/>
            <person name="Shimada H."/>
            <person name="Shimada K."/>
            <person name="Silva D."/>
            <person name="Sinclair B."/>
            <person name="Sperling S."/>
            <person name="Stupka E."/>
            <person name="Sugiura K."/>
            <person name="Sultana R."/>
            <person name="Takenaka Y."/>
            <person name="Taki K."/>
            <person name="Tammoja K."/>
            <person name="Tan S.L."/>
            <person name="Tang S."/>
            <person name="Taylor M.S."/>
            <person name="Tegner J."/>
            <person name="Teichmann S.A."/>
            <person name="Ueda H.R."/>
            <person name="van Nimwegen E."/>
            <person name="Verardo R."/>
            <person name="Wei C.L."/>
            <person name="Yagi K."/>
            <person name="Yamanishi H."/>
            <person name="Zabarovsky E."/>
            <person name="Zhu S."/>
            <person name="Zimmer A."/>
            <person name="Hide W."/>
            <person name="Bult C."/>
            <person name="Grimmond S.M."/>
            <person name="Teasdale R.D."/>
            <person name="Liu E.T."/>
            <person name="Brusic V."/>
            <person name="Quackenbush J."/>
            <person name="Wahlestedt C."/>
            <person name="Mattick J.S."/>
            <person name="Hume D.A."/>
            <person name="Kai C."/>
            <person name="Sasaki D."/>
            <person name="Tomaru Y."/>
            <person name="Fukuda S."/>
            <person name="Kanamori-Katayama M."/>
            <person name="Suzuki M."/>
            <person name="Aoki J."/>
            <person name="Arakawa T."/>
            <person name="Iida J."/>
            <person name="Imamura K."/>
            <person name="Itoh M."/>
            <person name="Kato T."/>
            <person name="Kawaji H."/>
            <person name="Kawagashira N."/>
            <person name="Kawashima T."/>
            <person name="Kojima M."/>
            <person name="Kondo S."/>
            <person name="Konno H."/>
            <person name="Nakano K."/>
            <person name="Ninomiya N."/>
            <person name="Nishio T."/>
            <person name="Okada M."/>
            <person name="Plessy C."/>
            <person name="Shibata K."/>
            <person name="Shiraki T."/>
            <person name="Suzuki S."/>
            <person name="Tagami M."/>
            <person name="Waki K."/>
            <person name="Watahiki A."/>
            <person name="Okamura-Oho Y."/>
            <person name="Suzuki H."/>
            <person name="Kawai J."/>
            <person name="Hayashizaki Y."/>
        </authorList>
    </citation>
    <scope>NUCLEOTIDE SEQUENCE [LARGE SCALE MRNA]</scope>
    <source>
        <strain>C57BL/6J</strain>
        <tissue>Colon</tissue>
        <tissue>Osteoclast</tissue>
        <tissue>Pancreas</tissue>
    </source>
</reference>
<reference key="2">
    <citation type="journal article" date="2004" name="Genome Res.">
        <title>The status, quality, and expansion of the NIH full-length cDNA project: the Mammalian Gene Collection (MGC).</title>
        <authorList>
            <consortium name="The MGC Project Team"/>
        </authorList>
    </citation>
    <scope>NUCLEOTIDE SEQUENCE [LARGE SCALE MRNA]</scope>
    <source>
        <strain>Czech II</strain>
        <strain>FVB/N</strain>
        <tissue>Mammary gland</tissue>
        <tissue>Salivary gland</tissue>
    </source>
</reference>
<reference key="3">
    <citation type="journal article" date="2006" name="Mol. Cell. Biol.">
        <title>Interaction between ROCK II and nucleophosmin/B23 in the regulation of centrosome duplication.</title>
        <authorList>
            <person name="Ma Z."/>
            <person name="Kanai M."/>
            <person name="Kawamura K."/>
            <person name="Kaibuchi K."/>
            <person name="Ye K."/>
            <person name="Fukasawa K."/>
        </authorList>
    </citation>
    <scope>PHOSPHORYLATION AT SER-20</scope>
</reference>
<reference key="4">
    <citation type="journal article" date="2010" name="Cell">
        <title>A tissue-specific atlas of mouse protein phosphorylation and expression.</title>
        <authorList>
            <person name="Huttlin E.L."/>
            <person name="Jedrychowski M.P."/>
            <person name="Elias J.E."/>
            <person name="Goswami T."/>
            <person name="Rad R."/>
            <person name="Beausoleil S.A."/>
            <person name="Villen J."/>
            <person name="Haas W."/>
            <person name="Sowa M.E."/>
            <person name="Gygi S.P."/>
        </authorList>
    </citation>
    <scope>IDENTIFICATION BY MASS SPECTROMETRY [LARGE SCALE ANALYSIS]</scope>
    <source>
        <tissue>Lung</tissue>
        <tissue>Spleen</tissue>
        <tissue>Testis</tissue>
    </source>
</reference>
<reference key="5">
    <citation type="journal article" date="2014" name="J. Biol. Chem.">
        <title>Mouse myosin-19 is a plus-end-directed, high-duty ratio molecular motor.</title>
        <authorList>
            <person name="Lu Z."/>
            <person name="Ma X.N."/>
            <person name="Zhang H.M."/>
            <person name="Ji H.H."/>
            <person name="Ding H."/>
            <person name="Zhang J."/>
            <person name="Luo D."/>
            <person name="Sun Y."/>
            <person name="Li X.D."/>
        </authorList>
    </citation>
    <scope>IDENTIFICATION BY MASS SPECTROMETRY</scope>
    <scope>INTERACTION WITH MYO19</scope>
</reference>
<reference key="6">
    <citation type="journal article" date="2018" name="Nat. Commun.">
        <title>Cell surface flip-flop of phosphatidylserine is critical for PIEZO1-mediated myotube formation.</title>
        <authorList>
            <person name="Tsuchiya M."/>
            <person name="Hara Y."/>
            <person name="Okuda M."/>
            <person name="Itoh K."/>
            <person name="Nishioka R."/>
            <person name="Shiomi A."/>
            <person name="Nagao K."/>
            <person name="Mori M."/>
            <person name="Mori Y."/>
            <person name="Ikenouchi J."/>
            <person name="Suzuki R."/>
            <person name="Tanaka M."/>
            <person name="Ohwada T."/>
            <person name="Aoki J."/>
            <person name="Kanagawa M."/>
            <person name="Toda T."/>
            <person name="Nagata Y."/>
            <person name="Matsuda R."/>
            <person name="Takayama Y."/>
            <person name="Tominaga M."/>
            <person name="Umeda M."/>
        </authorList>
    </citation>
    <scope>FUNCTION</scope>
    <scope>SUBCELLULAR LOCATION</scope>
    <scope>PHOSPHORYLATION AT THR-19 AND SER-20</scope>
    <scope>PTM</scope>
    <scope>MUTAGENESIS OF THR-19 AND SER-20</scope>
</reference>
<gene>
    <name type="primary">Myl9</name>
    <name type="synonym">Myrl2</name>
</gene>
<comment type="function">
    <text evidence="2 7">Myosin regulatory subunit that plays an important role in regulation of both smooth muscle and nonmuscle cell contractile activity via its phosphorylation. Implicated in cytokinesis, receptor capping, and cell locomotion (By similarity). In myoblasts, regulates PIEZO1-dependent cortical actomyosin assembly involved in myotube formation (PubMed:29799007).</text>
</comment>
<comment type="subunit">
    <text evidence="2 6">Myosin is a hexamer of 2 heavy chains and 4 light chains: interacts with myosin heavy chain MYO19 (PubMed:24825904). Interacts with LUZP1; the interaction results in inhibition of phosphorylation of MYL9 by DAPK3 (By similarity).</text>
</comment>
<comment type="subcellular location">
    <subcellularLocation>
        <location evidence="7">Cytoplasm</location>
        <location evidence="7">Cytoskeleton</location>
    </subcellularLocation>
    <subcellularLocation>
        <location evidence="7">Cytoplasm</location>
        <location evidence="7">Cell cortex</location>
    </subcellularLocation>
    <text evidence="7">Colocalizes with F-actin, MYH9 and PIEZO1 at the actomyosin cortex in myoblasts.</text>
</comment>
<comment type="PTM">
    <text evidence="2 7">Phosphorylation increases the actin-activated myosin ATPase activity and thereby regulates the contractile activity. It is required to generate the driving force in the migration of the cells but not necessary for localization of myosin-2 at the leading edge (By similarity). Phosphorylation is required for myotube formation (PubMed:29799007). Phosphorylated by DAPK3; DAPK3-mediated phosphorylation is inhibited by LUZP1 (By similarity).</text>
</comment>
<comment type="miscellaneous">
    <text evidence="1">This chain binds calcium.</text>
</comment>
<feature type="initiator methionine" description="Removed" evidence="3">
    <location>
        <position position="1"/>
    </location>
</feature>
<feature type="chain" id="PRO_0000198736" description="Myosin regulatory light polypeptide 9">
    <location>
        <begin position="2"/>
        <end position="172"/>
    </location>
</feature>
<feature type="domain" description="EF-hand 1" evidence="4">
    <location>
        <begin position="29"/>
        <end position="64"/>
    </location>
</feature>
<feature type="domain" description="EF-hand 2" evidence="4">
    <location>
        <begin position="98"/>
        <end position="133"/>
    </location>
</feature>
<feature type="domain" description="EF-hand 3" evidence="4">
    <location>
        <begin position="134"/>
        <end position="169"/>
    </location>
</feature>
<feature type="region of interest" description="Disordered" evidence="5">
    <location>
        <begin position="1"/>
        <end position="20"/>
    </location>
</feature>
<feature type="compositionally biased region" description="Basic residues" evidence="5">
    <location>
        <begin position="1"/>
        <end position="16"/>
    </location>
</feature>
<feature type="binding site" evidence="4">
    <location>
        <position position="42"/>
    </location>
    <ligand>
        <name>Ca(2+)</name>
        <dbReference type="ChEBI" id="CHEBI:29108"/>
    </ligand>
</feature>
<feature type="binding site" evidence="4">
    <location>
        <position position="44"/>
    </location>
    <ligand>
        <name>Ca(2+)</name>
        <dbReference type="ChEBI" id="CHEBI:29108"/>
    </ligand>
</feature>
<feature type="binding site" evidence="4">
    <location>
        <position position="46"/>
    </location>
    <ligand>
        <name>Ca(2+)</name>
        <dbReference type="ChEBI" id="CHEBI:29108"/>
    </ligand>
</feature>
<feature type="binding site" evidence="4">
    <location>
        <position position="53"/>
    </location>
    <ligand>
        <name>Ca(2+)</name>
        <dbReference type="ChEBI" id="CHEBI:29108"/>
    </ligand>
</feature>
<feature type="modified residue" description="N-acetylserine" evidence="3">
    <location>
        <position position="2"/>
    </location>
</feature>
<feature type="modified residue" description="Phosphothreonine; by MLCK, CIT and ROCK2" evidence="2 10">
    <location>
        <position position="19"/>
    </location>
</feature>
<feature type="modified residue" description="Phosphoserine; by CDC42BP, CIT, MLCK, PAK1, ROCK1, ROCK2, DAPK1, DAPK2 and ZIPK/DAPK3" evidence="9 10">
    <location>
        <position position="20"/>
    </location>
</feature>
<feature type="mutagenesis site" description="Prevents aberrant myotube formation in PIEZO1-deficient myoblast; when associated with D-20." evidence="7">
    <original>T</original>
    <variation>D</variation>
    <location>
        <position position="19"/>
    </location>
</feature>
<feature type="mutagenesis site" description="Prevents aberrant myotube formation in PIEZO1-deficient myoblast; when associated with D-19." evidence="7">
    <original>S</original>
    <variation>D</variation>
    <location>
        <position position="20"/>
    </location>
</feature>
<feature type="sequence conflict" description="In Ref. 1; BAE35452." evidence="8" ref="1">
    <original>D</original>
    <variation>V</variation>
    <location>
        <position position="132"/>
    </location>
</feature>
<proteinExistence type="evidence at protein level"/>